<proteinExistence type="inferred from homology"/>
<gene>
    <name type="primary">ald</name>
    <name type="ordered locus">SE_1384</name>
</gene>
<evidence type="ECO:0000250" key="1"/>
<evidence type="ECO:0000255" key="2"/>
<evidence type="ECO:0000305" key="3"/>
<keyword id="KW-0520">NAD</keyword>
<keyword id="KW-0547">Nucleotide-binding</keyword>
<keyword id="KW-0560">Oxidoreductase</keyword>
<organism>
    <name type="scientific">Staphylococcus epidermidis (strain ATCC 12228 / FDA PCI 1200)</name>
    <dbReference type="NCBI Taxonomy" id="176280"/>
    <lineage>
        <taxon>Bacteria</taxon>
        <taxon>Bacillati</taxon>
        <taxon>Bacillota</taxon>
        <taxon>Bacilli</taxon>
        <taxon>Bacillales</taxon>
        <taxon>Staphylococcaceae</taxon>
        <taxon>Staphylococcus</taxon>
    </lineage>
</organism>
<dbReference type="EC" id="1.4.1.1"/>
<dbReference type="EMBL" id="AE015929">
    <property type="protein sequence ID" value="AAO04983.1"/>
    <property type="molecule type" value="Genomic_DNA"/>
</dbReference>
<dbReference type="RefSeq" id="NP_764939.1">
    <property type="nucleotide sequence ID" value="NC_004461.1"/>
</dbReference>
<dbReference type="RefSeq" id="WP_001830775.1">
    <property type="nucleotide sequence ID" value="NZ_WBME01000042.1"/>
</dbReference>
<dbReference type="SMR" id="Q8CNW8"/>
<dbReference type="GeneID" id="50018502"/>
<dbReference type="KEGG" id="sep:SE_1384"/>
<dbReference type="PATRIC" id="fig|176280.10.peg.1352"/>
<dbReference type="eggNOG" id="COG0686">
    <property type="taxonomic scope" value="Bacteria"/>
</dbReference>
<dbReference type="HOGENOM" id="CLU_003376_3_0_9"/>
<dbReference type="OrthoDB" id="9804592at2"/>
<dbReference type="UniPathway" id="UPA00527">
    <property type="reaction ID" value="UER00585"/>
</dbReference>
<dbReference type="Proteomes" id="UP000001411">
    <property type="component" value="Chromosome"/>
</dbReference>
<dbReference type="GO" id="GO:0005829">
    <property type="term" value="C:cytosol"/>
    <property type="evidence" value="ECO:0000250"/>
    <property type="project" value="UniProtKB"/>
</dbReference>
<dbReference type="GO" id="GO:0005886">
    <property type="term" value="C:plasma membrane"/>
    <property type="evidence" value="ECO:0007669"/>
    <property type="project" value="TreeGrafter"/>
</dbReference>
<dbReference type="GO" id="GO:0000286">
    <property type="term" value="F:alanine dehydrogenase activity"/>
    <property type="evidence" value="ECO:0000250"/>
    <property type="project" value="UniProtKB"/>
</dbReference>
<dbReference type="GO" id="GO:0000166">
    <property type="term" value="F:nucleotide binding"/>
    <property type="evidence" value="ECO:0007669"/>
    <property type="project" value="UniProtKB-KW"/>
</dbReference>
<dbReference type="GO" id="GO:0006524">
    <property type="term" value="P:alanine catabolic process"/>
    <property type="evidence" value="ECO:0000250"/>
    <property type="project" value="UniProtKB"/>
</dbReference>
<dbReference type="GO" id="GO:0042853">
    <property type="term" value="P:L-alanine catabolic process"/>
    <property type="evidence" value="ECO:0007669"/>
    <property type="project" value="UniProtKB-UniPathway"/>
</dbReference>
<dbReference type="CDD" id="cd05305">
    <property type="entry name" value="L-AlaDH"/>
    <property type="match status" value="1"/>
</dbReference>
<dbReference type="FunFam" id="3.40.50.720:FF:000049">
    <property type="entry name" value="Alanine dehydrogenase"/>
    <property type="match status" value="1"/>
</dbReference>
<dbReference type="Gene3D" id="3.40.50.720">
    <property type="entry name" value="NAD(P)-binding Rossmann-like Domain"/>
    <property type="match status" value="2"/>
</dbReference>
<dbReference type="InterPro" id="IPR008141">
    <property type="entry name" value="Ala_DH"/>
</dbReference>
<dbReference type="InterPro" id="IPR008143">
    <property type="entry name" value="Ala_DH/PNT_CS2"/>
</dbReference>
<dbReference type="InterPro" id="IPR008142">
    <property type="entry name" value="AlaDH/PNT_CS1"/>
</dbReference>
<dbReference type="InterPro" id="IPR007886">
    <property type="entry name" value="AlaDH/PNT_N"/>
</dbReference>
<dbReference type="InterPro" id="IPR007698">
    <property type="entry name" value="AlaDH/PNT_NAD(H)-bd"/>
</dbReference>
<dbReference type="InterPro" id="IPR036291">
    <property type="entry name" value="NAD(P)-bd_dom_sf"/>
</dbReference>
<dbReference type="NCBIfam" id="TIGR00518">
    <property type="entry name" value="alaDH"/>
    <property type="match status" value="1"/>
</dbReference>
<dbReference type="PANTHER" id="PTHR42795">
    <property type="entry name" value="ALANINE DEHYDROGENASE"/>
    <property type="match status" value="1"/>
</dbReference>
<dbReference type="PANTHER" id="PTHR42795:SF1">
    <property type="entry name" value="ALANINE DEHYDROGENASE"/>
    <property type="match status" value="1"/>
</dbReference>
<dbReference type="Pfam" id="PF01262">
    <property type="entry name" value="AlaDh_PNT_C"/>
    <property type="match status" value="1"/>
</dbReference>
<dbReference type="Pfam" id="PF05222">
    <property type="entry name" value="AlaDh_PNT_N"/>
    <property type="match status" value="1"/>
</dbReference>
<dbReference type="PIRSF" id="PIRSF000183">
    <property type="entry name" value="Alanine_dh"/>
    <property type="match status" value="1"/>
</dbReference>
<dbReference type="SMART" id="SM01002">
    <property type="entry name" value="AlaDh_PNT_C"/>
    <property type="match status" value="1"/>
</dbReference>
<dbReference type="SMART" id="SM01003">
    <property type="entry name" value="AlaDh_PNT_N"/>
    <property type="match status" value="1"/>
</dbReference>
<dbReference type="SUPFAM" id="SSF52283">
    <property type="entry name" value="Formate/glycerate dehydrogenase catalytic domain-like"/>
    <property type="match status" value="1"/>
</dbReference>
<dbReference type="SUPFAM" id="SSF51735">
    <property type="entry name" value="NAD(P)-binding Rossmann-fold domains"/>
    <property type="match status" value="1"/>
</dbReference>
<dbReference type="PROSITE" id="PS00836">
    <property type="entry name" value="ALADH_PNT_1"/>
    <property type="match status" value="1"/>
</dbReference>
<dbReference type="PROSITE" id="PS00837">
    <property type="entry name" value="ALADH_PNT_2"/>
    <property type="match status" value="1"/>
</dbReference>
<accession>Q8CNW8</accession>
<reference key="1">
    <citation type="journal article" date="2003" name="Mol. Microbiol.">
        <title>Genome-based analysis of virulence genes in a non-biofilm-forming Staphylococcus epidermidis strain (ATCC 12228).</title>
        <authorList>
            <person name="Zhang Y.-Q."/>
            <person name="Ren S.-X."/>
            <person name="Li H.-L."/>
            <person name="Wang Y.-X."/>
            <person name="Fu G."/>
            <person name="Yang J."/>
            <person name="Qin Z.-Q."/>
            <person name="Miao Y.-G."/>
            <person name="Wang W.-Y."/>
            <person name="Chen R.-S."/>
            <person name="Shen Y."/>
            <person name="Chen Z."/>
            <person name="Yuan Z.-H."/>
            <person name="Zhao G.-P."/>
            <person name="Qu D."/>
            <person name="Danchin A."/>
            <person name="Wen Y.-M."/>
        </authorList>
    </citation>
    <scope>NUCLEOTIDE SEQUENCE [LARGE SCALE GENOMIC DNA]</scope>
    <source>
        <strain>ATCC 12228 / FDA PCI 1200</strain>
    </source>
</reference>
<comment type="function">
    <text evidence="1">Catalyzes the reversible reductive amination of pyruvate to L-alanine. May play a role in cell wall synthesis as L-alanine is an important constituent of the peptidoglycan layer (By similarity).</text>
</comment>
<comment type="catalytic activity">
    <reaction>
        <text>L-alanine + NAD(+) + H2O = pyruvate + NH4(+) + NADH + H(+)</text>
        <dbReference type="Rhea" id="RHEA:18405"/>
        <dbReference type="ChEBI" id="CHEBI:15361"/>
        <dbReference type="ChEBI" id="CHEBI:15377"/>
        <dbReference type="ChEBI" id="CHEBI:15378"/>
        <dbReference type="ChEBI" id="CHEBI:28938"/>
        <dbReference type="ChEBI" id="CHEBI:57540"/>
        <dbReference type="ChEBI" id="CHEBI:57945"/>
        <dbReference type="ChEBI" id="CHEBI:57972"/>
        <dbReference type="EC" id="1.4.1.1"/>
    </reaction>
</comment>
<comment type="pathway">
    <text>Amino-acid degradation; L-alanine degradation via dehydrogenase pathway; NH(3) and pyruvate from L-alanine: step 1/1.</text>
</comment>
<comment type="subunit">
    <text evidence="1">Homohexamer. Trimer of dimer (By similarity).</text>
</comment>
<comment type="similarity">
    <text evidence="3">Belongs to the AlaDH/PNT family.</text>
</comment>
<sequence>MKIGIPKEIKNNENRVGLSPSGVHALVDQGHEVLVETNAGLGSYFEDGDYQEAGAKIVDEQSKAWDVDMVIKVKEPLESEYKFFKEELILFTYLHLANEQKLTQALVDNKVISIAYETVQLPDGSLPLLTPMSEVAGRMSTQVGAEFLQRFNGGMGILLGGIPGVPKGKVTIIGGGQAGTNAAKIALGLGAEVTILDVNPKRLEELEDLFDGRVRTIMSNPLNIEMYVKESDLVIGAVLIPGAKAPNLVTEDMIKEMKDGSVIVDIAIDQGGIFETTDKITTHDNPTYTKHGVVHYAVANMPGAVPRTSTIGLNNATLPYAQLLANKGYREAFKVNHPLSLGLNTFNGHVTNKNVADTFNFEYTSIEDALK</sequence>
<protein>
    <recommendedName>
        <fullName>Alanine dehydrogenase</fullName>
        <ecNumber>1.4.1.1</ecNumber>
    </recommendedName>
</protein>
<feature type="chain" id="PRO_0000199007" description="Alanine dehydrogenase">
    <location>
        <begin position="1"/>
        <end position="371"/>
    </location>
</feature>
<feature type="active site" description="Proton donor/acceptor" evidence="2">
    <location>
        <position position="95"/>
    </location>
</feature>
<feature type="active site" description="Proton donor/acceptor" evidence="1">
    <location>
        <position position="269"/>
    </location>
</feature>
<feature type="binding site" evidence="1">
    <location>
        <position position="15"/>
    </location>
    <ligand>
        <name>substrate</name>
    </ligand>
</feature>
<feature type="binding site" evidence="1">
    <location>
        <position position="74"/>
    </location>
    <ligand>
        <name>substrate</name>
    </ligand>
</feature>
<feature type="binding site" evidence="1">
    <location>
        <position position="133"/>
    </location>
    <ligand>
        <name>NAD(+)</name>
        <dbReference type="ChEBI" id="CHEBI:57540"/>
    </ligand>
</feature>
<feature type="binding site" evidence="1">
    <location>
        <begin position="177"/>
        <end position="178"/>
    </location>
    <ligand>
        <name>NAD(+)</name>
        <dbReference type="ChEBI" id="CHEBI:57540"/>
    </ligand>
</feature>
<feature type="binding site" evidence="1">
    <location>
        <position position="197"/>
    </location>
    <ligand>
        <name>NAD(+)</name>
        <dbReference type="ChEBI" id="CHEBI:57540"/>
    </ligand>
</feature>
<feature type="binding site" evidence="1">
    <location>
        <position position="219"/>
    </location>
    <ligand>
        <name>NAD(+)</name>
        <dbReference type="ChEBI" id="CHEBI:57540"/>
    </ligand>
</feature>
<feature type="binding site" evidence="1">
    <location>
        <begin position="238"/>
        <end position="239"/>
    </location>
    <ligand>
        <name>NAD(+)</name>
        <dbReference type="ChEBI" id="CHEBI:57540"/>
    </ligand>
</feature>
<feature type="binding site" evidence="1">
    <location>
        <begin position="266"/>
        <end position="269"/>
    </location>
    <ligand>
        <name>NAD(+)</name>
        <dbReference type="ChEBI" id="CHEBI:57540"/>
    </ligand>
</feature>
<feature type="binding site" evidence="1">
    <location>
        <begin position="298"/>
        <end position="301"/>
    </location>
    <ligand>
        <name>NAD(+)</name>
        <dbReference type="ChEBI" id="CHEBI:57540"/>
    </ligand>
</feature>
<name>DHA_STAES</name>